<protein>
    <recommendedName>
        <fullName evidence="5">Mannuronan C5-epimerase</fullName>
        <ecNumber evidence="3">5.1.3.37</ecNumber>
    </recommendedName>
    <alternativeName>
        <fullName evidence="4">Alginate epimerase</fullName>
    </alternativeName>
    <alternativeName>
        <fullName evidence="1">Poly(beta-D-mannuronate) C5 epimerase</fullName>
    </alternativeName>
</protein>
<feature type="signal peptide" evidence="2">
    <location>
        <begin position="1"/>
        <end position="36"/>
    </location>
</feature>
<feature type="chain" id="PRO_0000001128" description="Mannuronan C5-epimerase">
    <location>
        <begin position="37"/>
        <end position="536"/>
    </location>
</feature>
<feature type="repeat" description="PbH1 1" evidence="2">
    <location>
        <begin position="298"/>
        <end position="320"/>
    </location>
</feature>
<feature type="repeat" description="PbH1 2" evidence="2">
    <location>
        <begin position="322"/>
        <end position="345"/>
    </location>
</feature>
<feature type="repeat" description="PbH1 3" evidence="2">
    <location>
        <begin position="347"/>
        <end position="369"/>
    </location>
</feature>
<feature type="repeat" description="PbH1 4" evidence="2">
    <location>
        <begin position="371"/>
        <end position="393"/>
    </location>
</feature>
<feature type="repeat" description="PbH1 5" evidence="2">
    <location>
        <begin position="394"/>
        <end position="416"/>
    </location>
</feature>
<feature type="active site" description="Proton acceptor" evidence="6">
    <location>
        <position position="319"/>
    </location>
</feature>
<feature type="mutagenesis site" description="Retains 24% of epimerase activity." evidence="3">
    <original>Y</original>
    <variation>A</variation>
    <location>
        <position position="294"/>
    </location>
</feature>
<feature type="mutagenesis site" description="Retains 66% of epimerase activity." evidence="3">
    <original>Y</original>
    <variation>F</variation>
    <location>
        <position position="294"/>
    </location>
</feature>
<feature type="mutagenesis site" description="Retains 66% of epimerase activity." evidence="3">
    <original>Y</original>
    <variation>A</variation>
    <location>
        <position position="296"/>
    </location>
</feature>
<feature type="mutagenesis site" description="Retains 5% of epimerase activity." evidence="3">
    <original>Y</original>
    <variation>F</variation>
    <location>
        <position position="314"/>
    </location>
</feature>
<feature type="mutagenesis site" description="Retains 5% of epimerase activity." evidence="3">
    <original>D</original>
    <variation>A</variation>
    <location>
        <position position="317"/>
    </location>
</feature>
<feature type="mutagenesis site" description="Loss of epimerase activity." evidence="3">
    <original>H</original>
    <variation>A</variation>
    <location>
        <position position="319"/>
    </location>
</feature>
<feature type="mutagenesis site" description="Loss of epimerase activity." evidence="3">
    <original>D</original>
    <variation>A</variation>
    <location>
        <position position="320"/>
    </location>
</feature>
<feature type="mutagenesis site" description="Retains 87% of epimerase activity." evidence="3">
    <original>K</original>
    <variation>A</variation>
    <location>
        <position position="338"/>
    </location>
</feature>
<feature type="mutagenesis site" description="Retains 49% of epimerase activity." evidence="3">
    <original>H</original>
    <variation>A</variation>
    <location>
        <position position="339"/>
    </location>
</feature>
<feature type="mutagenesis site" description="Retains 54% of epimerase activity." evidence="3">
    <original>S</original>
    <variation>A</variation>
    <location>
        <position position="344"/>
    </location>
</feature>
<feature type="mutagenesis site" description="Retains 10% of epimerase activity." evidence="3">
    <original>R</original>
    <variation>A</variation>
    <variation>Q</variation>
    <location>
        <position position="345"/>
    </location>
</feature>
<feature type="mutagenesis site" description="Loss of epimerase activity." evidence="3">
    <original>R</original>
    <variation>E</variation>
    <location>
        <position position="345"/>
    </location>
</feature>
<feature type="mutagenesis site" description="Retains 36% of epimerase activity." evidence="3">
    <original>R</original>
    <variation>K</variation>
    <location>
        <position position="345"/>
    </location>
</feature>
<feature type="mutagenesis site" description="Retains 5% of epimerase activity." evidence="3">
    <original>D</original>
    <variation>N</variation>
    <location>
        <position position="368"/>
    </location>
</feature>
<feature type="mutagenesis site" description="Retains 23% of epimerase activity." evidence="3">
    <original>R</original>
    <variation>A</variation>
    <location>
        <position position="369"/>
    </location>
</feature>
<feature type="mutagenesis site" description="Retains 65% of epimerase activity." evidence="3">
    <original>Y</original>
    <variation>F</variation>
    <variation>A</variation>
    <location>
        <position position="392"/>
    </location>
</feature>
<feature type="mutagenesis site" description="Loss of epimerase activity." evidence="3">
    <original>R</original>
    <variation>C</variation>
    <location>
        <position position="415"/>
    </location>
</feature>
<feature type="mutagenesis site" description="Retains 63% of epimerase activity." evidence="3">
    <original>D</original>
    <variation>A</variation>
    <location>
        <position position="452"/>
    </location>
</feature>
<feature type="helix" evidence="11">
    <location>
        <begin position="83"/>
        <end position="87"/>
    </location>
</feature>
<feature type="strand" evidence="11">
    <location>
        <begin position="93"/>
        <end position="95"/>
    </location>
</feature>
<feature type="strand" evidence="11">
    <location>
        <begin position="97"/>
        <end position="102"/>
    </location>
</feature>
<feature type="helix" evidence="11">
    <location>
        <begin position="103"/>
        <end position="105"/>
    </location>
</feature>
<feature type="turn" evidence="11">
    <location>
        <begin position="107"/>
        <end position="109"/>
    </location>
</feature>
<feature type="helix" evidence="12">
    <location>
        <begin position="116"/>
        <end position="118"/>
    </location>
</feature>
<feature type="helix" evidence="11">
    <location>
        <begin position="120"/>
        <end position="126"/>
    </location>
</feature>
<feature type="strand" evidence="11">
    <location>
        <begin position="131"/>
        <end position="141"/>
    </location>
</feature>
<feature type="helix" evidence="11">
    <location>
        <begin position="142"/>
        <end position="148"/>
    </location>
</feature>
<feature type="turn" evidence="11">
    <location>
        <begin position="151"/>
        <end position="153"/>
    </location>
</feature>
<feature type="strand" evidence="11">
    <location>
        <begin position="154"/>
        <end position="158"/>
    </location>
</feature>
<feature type="strand" evidence="11">
    <location>
        <begin position="161"/>
        <end position="164"/>
    </location>
</feature>
<feature type="strand" evidence="11">
    <location>
        <begin position="168"/>
        <end position="170"/>
    </location>
</feature>
<feature type="strand" evidence="11">
    <location>
        <begin position="174"/>
        <end position="178"/>
    </location>
</feature>
<feature type="strand" evidence="11">
    <location>
        <begin position="184"/>
        <end position="189"/>
    </location>
</feature>
<feature type="strand" evidence="11">
    <location>
        <begin position="195"/>
        <end position="198"/>
    </location>
</feature>
<feature type="strand" evidence="11">
    <location>
        <begin position="200"/>
        <end position="212"/>
    </location>
</feature>
<feature type="turn" evidence="11">
    <location>
        <begin position="213"/>
        <end position="216"/>
    </location>
</feature>
<feature type="strand" evidence="11">
    <location>
        <begin position="231"/>
        <end position="233"/>
    </location>
</feature>
<feature type="strand" evidence="11">
    <location>
        <begin position="238"/>
        <end position="248"/>
    </location>
</feature>
<feature type="strand" evidence="11">
    <location>
        <begin position="258"/>
        <end position="262"/>
    </location>
</feature>
<feature type="helix" evidence="11">
    <location>
        <begin position="266"/>
        <end position="272"/>
    </location>
</feature>
<feature type="strand" evidence="11">
    <location>
        <begin position="278"/>
        <end position="283"/>
    </location>
</feature>
<feature type="strand" evidence="11">
    <location>
        <begin position="285"/>
        <end position="288"/>
    </location>
</feature>
<feature type="strand" evidence="11">
    <location>
        <begin position="290"/>
        <end position="297"/>
    </location>
</feature>
<feature type="strand" evidence="11">
    <location>
        <begin position="302"/>
        <end position="304"/>
    </location>
</feature>
<feature type="strand" evidence="11">
    <location>
        <begin position="307"/>
        <end position="310"/>
    </location>
</feature>
<feature type="strand" evidence="11">
    <location>
        <begin position="312"/>
        <end position="321"/>
    </location>
</feature>
<feature type="strand" evidence="11">
    <location>
        <begin position="326"/>
        <end position="329"/>
    </location>
</feature>
<feature type="strand" evidence="11">
    <location>
        <begin position="331"/>
        <end position="333"/>
    </location>
</feature>
<feature type="strand" evidence="13">
    <location>
        <begin position="336"/>
        <end position="338"/>
    </location>
</feature>
<feature type="strand" evidence="11">
    <location>
        <begin position="341"/>
        <end position="346"/>
    </location>
</feature>
<feature type="strand" evidence="11">
    <location>
        <begin position="351"/>
        <end position="354"/>
    </location>
</feature>
<feature type="strand" evidence="11">
    <location>
        <begin position="356"/>
        <end position="359"/>
    </location>
</feature>
<feature type="strand" evidence="11">
    <location>
        <begin position="364"/>
        <end position="370"/>
    </location>
</feature>
<feature type="strand" evidence="11">
    <location>
        <begin position="375"/>
        <end position="378"/>
    </location>
</feature>
<feature type="strand" evidence="11">
    <location>
        <begin position="380"/>
        <end position="382"/>
    </location>
</feature>
<feature type="strand" evidence="11">
    <location>
        <begin position="388"/>
        <end position="393"/>
    </location>
</feature>
<feature type="strand" evidence="11">
    <location>
        <begin position="398"/>
        <end position="401"/>
    </location>
</feature>
<feature type="strand" evidence="11">
    <location>
        <begin position="403"/>
        <end position="405"/>
    </location>
</feature>
<feature type="strand" evidence="11">
    <location>
        <begin position="411"/>
        <end position="416"/>
    </location>
</feature>
<feature type="strand" evidence="11">
    <location>
        <begin position="419"/>
        <end position="424"/>
    </location>
</feature>
<feature type="strand" evidence="11">
    <location>
        <begin position="426"/>
        <end position="429"/>
    </location>
</feature>
<feature type="strand" evidence="11">
    <location>
        <begin position="431"/>
        <end position="438"/>
    </location>
</feature>
<feature type="turn" evidence="11">
    <location>
        <begin position="449"/>
        <end position="451"/>
    </location>
</feature>
<feature type="strand" evidence="11">
    <location>
        <begin position="459"/>
        <end position="469"/>
    </location>
</feature>
<feature type="strand" evidence="11">
    <location>
        <begin position="471"/>
        <end position="477"/>
    </location>
</feature>
<feature type="strand" evidence="11">
    <location>
        <begin position="481"/>
        <end position="487"/>
    </location>
</feature>
<feature type="strand" evidence="14">
    <location>
        <begin position="489"/>
        <end position="491"/>
    </location>
</feature>
<comment type="function">
    <text evidence="1 3">Catalyzes the epimerization of beta-D-mannuronate to alpha-L-guluronate during the synthesis of the linear polysaccharide alginate (PubMed:24398681). In addition, is part of a periplasmic protein complex that protects alginate from degradation by AlgL by channeling the newly formed alginate polymer through a scaffold that transfers the alginate polymer through the periplasmic space to the outer membrane secretin AlgE (By similarity).</text>
</comment>
<comment type="catalytic activity">
    <reaction evidence="3">
        <text>[(1-&gt;4)-beta-D-mannuronosyl](n) = [alginate](n)</text>
        <dbReference type="Rhea" id="RHEA:45572"/>
        <dbReference type="Rhea" id="RHEA-COMP:11264"/>
        <dbReference type="Rhea" id="RHEA-COMP:11270"/>
        <dbReference type="ChEBI" id="CHEBI:58187"/>
        <dbReference type="ChEBI" id="CHEBI:85311"/>
        <dbReference type="EC" id="5.1.3.37"/>
    </reaction>
</comment>
<comment type="pathway">
    <text evidence="1">Glycan biosynthesis; alginate biosynthesis.</text>
</comment>
<comment type="subcellular location">
    <subcellularLocation>
        <location evidence="1">Periplasm</location>
    </subcellularLocation>
</comment>
<comment type="domain">
    <text evidence="3">The C-terminal region contains a right-handed beta-helix (RHbetaH) fold, which is common among proteins that bind and cleave long-chain linear polysaccharides.</text>
</comment>
<comment type="similarity">
    <text evidence="5">Belongs to the D-mannuronate C5-epimerase family.</text>
</comment>
<organism>
    <name type="scientific">Pseudomonas syringae pv. tomato (strain ATCC BAA-871 / DC3000)</name>
    <dbReference type="NCBI Taxonomy" id="223283"/>
    <lineage>
        <taxon>Bacteria</taxon>
        <taxon>Pseudomonadati</taxon>
        <taxon>Pseudomonadota</taxon>
        <taxon>Gammaproteobacteria</taxon>
        <taxon>Pseudomonadales</taxon>
        <taxon>Pseudomonadaceae</taxon>
        <taxon>Pseudomonas</taxon>
    </lineage>
</organism>
<sequence>MNSHASNGRSRNWPHALLESALLTSALLMASSVALANAPAVPEAPKALVKELHQAKTYTITSPPTGPLEMAKPVLPDLSGYTTEAALKKIARNKPGKITVARMMEETGLKEFIGGDNKMAEWVVRQKGIPQAIMISDGYVNLQDLVKKVPKQFLSEVSPGVYVARLPILVKETGIFEIDSKTKELRLSQEKGSFIVSEGKMLITNTSVNAWSETRNGLAAYRTPDEFRPFVLTWGGSQTWIAKTKMASMGYNQSKSYGVSISQYTPNTAKVLKRGEPTGWIIDSEFADMWYGFYCYETRDFVVKGNTYRDNIVYGIDPHDRSHGLIIAENDVYGTKKKHGIIISREVDNSFIFRNKSHNNKLSGVVLDRNSVGNIVAYNEIYQNHTDGITLYESGNNLLWGNRVIANRRHGIRVRNSVNIKLYENVAMANGLMGVYGHIKDLNDTDRDIELDPFDAQVSLIMVGGELSSNGSGPLSIDSPLSVELYRVSMLMPTKEVGISLNGILGERQDEILDLLVRQKKAVLIDPVESQTELRE</sequence>
<dbReference type="EC" id="5.1.3.37" evidence="3"/>
<dbReference type="EMBL" id="AE016853">
    <property type="protein sequence ID" value="AAO54763.1"/>
    <property type="molecule type" value="Genomic_DNA"/>
</dbReference>
<dbReference type="RefSeq" id="NP_791068.1">
    <property type="nucleotide sequence ID" value="NC_004578.1"/>
</dbReference>
<dbReference type="RefSeq" id="WP_011103483.1">
    <property type="nucleotide sequence ID" value="NC_004578.1"/>
</dbReference>
<dbReference type="PDB" id="4NK6">
    <property type="method" value="X-ray"/>
    <property type="resolution" value="2.10 A"/>
    <property type="chains" value="A=46-536"/>
</dbReference>
<dbReference type="PDB" id="4NK8">
    <property type="method" value="X-ray"/>
    <property type="resolution" value="2.29 A"/>
    <property type="chains" value="A=46-536"/>
</dbReference>
<dbReference type="PDB" id="4OZY">
    <property type="method" value="X-ray"/>
    <property type="resolution" value="2.90 A"/>
    <property type="chains" value="A=69-491"/>
</dbReference>
<dbReference type="PDB" id="4OZZ">
    <property type="method" value="X-ray"/>
    <property type="resolution" value="2.90 A"/>
    <property type="chains" value="A=69-492"/>
</dbReference>
<dbReference type="PDBsum" id="4NK6"/>
<dbReference type="PDBsum" id="4NK8"/>
<dbReference type="PDBsum" id="4OZY"/>
<dbReference type="PDBsum" id="4OZZ"/>
<dbReference type="SMR" id="Q887Q3"/>
<dbReference type="STRING" id="223283.PSPTO_1238"/>
<dbReference type="GeneID" id="1182874"/>
<dbReference type="KEGG" id="pst:PSPTO_1238"/>
<dbReference type="PATRIC" id="fig|223283.9.peg.1259"/>
<dbReference type="eggNOG" id="COG3420">
    <property type="taxonomic scope" value="Bacteria"/>
</dbReference>
<dbReference type="HOGENOM" id="CLU_038044_0_0_6"/>
<dbReference type="OrthoDB" id="6189730at2"/>
<dbReference type="PhylomeDB" id="Q887Q3"/>
<dbReference type="BRENDA" id="5.1.3.37">
    <property type="organism ID" value="10904"/>
</dbReference>
<dbReference type="UniPathway" id="UPA00286"/>
<dbReference type="EvolutionaryTrace" id="Q887Q3"/>
<dbReference type="Proteomes" id="UP000002515">
    <property type="component" value="Chromosome"/>
</dbReference>
<dbReference type="GO" id="GO:0042597">
    <property type="term" value="C:periplasmic space"/>
    <property type="evidence" value="ECO:0007669"/>
    <property type="project" value="UniProtKB-SubCell"/>
</dbReference>
<dbReference type="GO" id="GO:0016853">
    <property type="term" value="F:isomerase activity"/>
    <property type="evidence" value="ECO:0007669"/>
    <property type="project" value="UniProtKB-KW"/>
</dbReference>
<dbReference type="GO" id="GO:0042121">
    <property type="term" value="P:alginic acid biosynthetic process"/>
    <property type="evidence" value="ECO:0007669"/>
    <property type="project" value="UniProtKB-UniPathway"/>
</dbReference>
<dbReference type="Gene3D" id="2.160.20.10">
    <property type="entry name" value="Single-stranded right-handed beta-helix, Pectin lyase-like"/>
    <property type="match status" value="1"/>
</dbReference>
<dbReference type="InterPro" id="IPR039448">
    <property type="entry name" value="Beta_helix"/>
</dbReference>
<dbReference type="InterPro" id="IPR006633">
    <property type="entry name" value="Carb-bd_sugar_hydrolysis-dom"/>
</dbReference>
<dbReference type="InterPro" id="IPR053409">
    <property type="entry name" value="Mannuronan_C5-epimerase"/>
</dbReference>
<dbReference type="InterPro" id="IPR022441">
    <property type="entry name" value="Para_beta_helix_rpt-2"/>
</dbReference>
<dbReference type="InterPro" id="IPR006626">
    <property type="entry name" value="PbH1"/>
</dbReference>
<dbReference type="InterPro" id="IPR012334">
    <property type="entry name" value="Pectin_lyas_fold"/>
</dbReference>
<dbReference type="InterPro" id="IPR011050">
    <property type="entry name" value="Pectin_lyase_fold/virulence"/>
</dbReference>
<dbReference type="NCBIfam" id="NF038177">
    <property type="entry name" value="epimerase_AlgG"/>
    <property type="match status" value="1"/>
</dbReference>
<dbReference type="NCBIfam" id="TIGR03804">
    <property type="entry name" value="para_beta_helix"/>
    <property type="match status" value="1"/>
</dbReference>
<dbReference type="Pfam" id="PF13229">
    <property type="entry name" value="Beta_helix"/>
    <property type="match status" value="1"/>
</dbReference>
<dbReference type="SMART" id="SM00722">
    <property type="entry name" value="CASH"/>
    <property type="match status" value="1"/>
</dbReference>
<dbReference type="SMART" id="SM00710">
    <property type="entry name" value="PbH1"/>
    <property type="match status" value="5"/>
</dbReference>
<dbReference type="SUPFAM" id="SSF51126">
    <property type="entry name" value="Pectin lyase-like"/>
    <property type="match status" value="1"/>
</dbReference>
<accession>Q887Q3</accession>
<name>ALGG_PSESM</name>
<reference key="1">
    <citation type="journal article" date="2003" name="Proc. Natl. Acad. Sci. U.S.A.">
        <title>The complete genome sequence of the Arabidopsis and tomato pathogen Pseudomonas syringae pv. tomato DC3000.</title>
        <authorList>
            <person name="Buell C.R."/>
            <person name="Joardar V."/>
            <person name="Lindeberg M."/>
            <person name="Selengut J."/>
            <person name="Paulsen I.T."/>
            <person name="Gwinn M.L."/>
            <person name="Dodson R.J."/>
            <person name="DeBoy R.T."/>
            <person name="Durkin A.S."/>
            <person name="Kolonay J.F."/>
            <person name="Madupu R."/>
            <person name="Daugherty S.C."/>
            <person name="Brinkac L.M."/>
            <person name="Beanan M.J."/>
            <person name="Haft D.H."/>
            <person name="Nelson W.C."/>
            <person name="Davidsen T.M."/>
            <person name="Zafar N."/>
            <person name="Zhou L."/>
            <person name="Liu J."/>
            <person name="Yuan Q."/>
            <person name="Khouri H.M."/>
            <person name="Fedorova N.B."/>
            <person name="Tran B."/>
            <person name="Russell D."/>
            <person name="Berry K.J."/>
            <person name="Utterback T.R."/>
            <person name="Van Aken S.E."/>
            <person name="Feldblyum T.V."/>
            <person name="D'Ascenzo M."/>
            <person name="Deng W.-L."/>
            <person name="Ramos A.R."/>
            <person name="Alfano J.R."/>
            <person name="Cartinhour S."/>
            <person name="Chatterjee A.K."/>
            <person name="Delaney T.P."/>
            <person name="Lazarowitz S.G."/>
            <person name="Martin G.B."/>
            <person name="Schneider D.J."/>
            <person name="Tang X."/>
            <person name="Bender C.L."/>
            <person name="White O."/>
            <person name="Fraser C.M."/>
            <person name="Collmer A."/>
        </authorList>
    </citation>
    <scope>NUCLEOTIDE SEQUENCE [LARGE SCALE GENOMIC DNA]</scope>
    <source>
        <strain>ATCC BAA-871 / DC3000</strain>
    </source>
</reference>
<reference evidence="7 8" key="2">
    <citation type="journal article" date="2014" name="J. Biol. Chem.">
        <title>Catalytic mechanism and mode of action of the periplasmic alginate epimerase AlgG.</title>
        <authorList>
            <person name="Wolfram F."/>
            <person name="Kitova E.N."/>
            <person name="Robinson H."/>
            <person name="Walvoort M.T."/>
            <person name="Codee J.D."/>
            <person name="Klassen J.S."/>
            <person name="Howell P.L."/>
        </authorList>
    </citation>
    <scope>X-RAY CRYSTALLOGRAPHY (2.10 ANGSTROMS) OF 46-536 OF WILD-TYPE AND MUTANT ALA-317</scope>
    <scope>FUNCTION</scope>
    <scope>CATALYTIC ACTIVITY</scope>
    <scope>ACTIVE SITE</scope>
    <scope>MUTAGENESIS OF TYR-294; TYR-296; TYR-314; ASP-317; HIS-319; ASP-320; LYS-338; HIS-339; SER-344; ARG-345; ASP-368; ARG-369; TYR-392; ARG-415 AND ASP-452</scope>
    <source>
        <strain>ATCC BAA-871 / DC3000</strain>
    </source>
</reference>
<reference evidence="9" key="3">
    <citation type="submission" date="2014-02" db="PDB data bank">
        <title>Crystal Structure of the periplasmic alginate epimerase AlgG T265N mutant.</title>
        <authorList>
            <person name="Howell P.L."/>
            <person name="Wolfram F."/>
            <person name="Robinson H."/>
        </authorList>
    </citation>
    <scope>X-RAY CRYSTALLOGRAPHY (2.90 ANGSTROMS) OF 69-491 OF MUTANT ASN-265</scope>
</reference>
<reference evidence="10" key="4">
    <citation type="submission" date="2014-02" db="PDB data bank">
        <title>Crystal Structure of the periplasmic alginate epimerase AlgG T265N T268M double mutant.</title>
        <authorList>
            <person name="Howell P.L."/>
            <person name="Wolfram F."/>
            <person name="Robinson H."/>
        </authorList>
    </citation>
    <scope>X-RAY CRYSTALLOGRAPHY (2.90 ANGSTROMS) OF 69-492 OF MUTANT ASN-265/MET-268</scope>
</reference>
<evidence type="ECO:0000250" key="1">
    <source>
        <dbReference type="UniProtKB" id="Q51371"/>
    </source>
</evidence>
<evidence type="ECO:0000255" key="2"/>
<evidence type="ECO:0000269" key="3">
    <source>
    </source>
</evidence>
<evidence type="ECO:0000303" key="4">
    <source>
    </source>
</evidence>
<evidence type="ECO:0000305" key="5"/>
<evidence type="ECO:0000305" key="6">
    <source>
    </source>
</evidence>
<evidence type="ECO:0007744" key="7">
    <source>
        <dbReference type="PDB" id="4NK6"/>
    </source>
</evidence>
<evidence type="ECO:0007744" key="8">
    <source>
        <dbReference type="PDB" id="4NK8"/>
    </source>
</evidence>
<evidence type="ECO:0007744" key="9">
    <source>
        <dbReference type="PDB" id="4OZY"/>
    </source>
</evidence>
<evidence type="ECO:0007744" key="10">
    <source>
        <dbReference type="PDB" id="4OZZ"/>
    </source>
</evidence>
<evidence type="ECO:0007829" key="11">
    <source>
        <dbReference type="PDB" id="4NK6"/>
    </source>
</evidence>
<evidence type="ECO:0007829" key="12">
    <source>
        <dbReference type="PDB" id="4NK8"/>
    </source>
</evidence>
<evidence type="ECO:0007829" key="13">
    <source>
        <dbReference type="PDB" id="4OZY"/>
    </source>
</evidence>
<evidence type="ECO:0007829" key="14">
    <source>
        <dbReference type="PDB" id="4OZZ"/>
    </source>
</evidence>
<proteinExistence type="evidence at protein level"/>
<gene>
    <name type="primary">algG</name>
    <name type="ordered locus">PSPTO_1238</name>
</gene>
<keyword id="KW-0002">3D-structure</keyword>
<keyword id="KW-0016">Alginate biosynthesis</keyword>
<keyword id="KW-0413">Isomerase</keyword>
<keyword id="KW-0574">Periplasm</keyword>
<keyword id="KW-1185">Reference proteome</keyword>
<keyword id="KW-0677">Repeat</keyword>
<keyword id="KW-0732">Signal</keyword>